<keyword id="KW-1003">Cell membrane</keyword>
<keyword id="KW-0472">Membrane</keyword>
<keyword id="KW-0812">Transmembrane</keyword>
<keyword id="KW-1133">Transmembrane helix</keyword>
<keyword id="KW-0843">Virulence</keyword>
<gene>
    <name evidence="2" type="primary">esaA</name>
    <name type="ordered locus">SAV0283</name>
</gene>
<name>ESAA_STAAM</name>
<organism>
    <name type="scientific">Staphylococcus aureus (strain Mu50 / ATCC 700699)</name>
    <dbReference type="NCBI Taxonomy" id="158878"/>
    <lineage>
        <taxon>Bacteria</taxon>
        <taxon>Bacillati</taxon>
        <taxon>Bacillota</taxon>
        <taxon>Bacilli</taxon>
        <taxon>Bacillales</taxon>
        <taxon>Staphylococcaceae</taxon>
        <taxon>Staphylococcus</taxon>
    </lineage>
</organism>
<dbReference type="EMBL" id="BA000017">
    <property type="protein sequence ID" value="BAB56445.1"/>
    <property type="molecule type" value="Genomic_DNA"/>
</dbReference>
<dbReference type="RefSeq" id="WP_000728958.1">
    <property type="nucleotide sequence ID" value="NC_002758.2"/>
</dbReference>
<dbReference type="SMR" id="Q99WU3"/>
<dbReference type="TCDB" id="3.A.7.17.1">
    <property type="family name" value="the type iv (conjugal dna-protein transfer or virb) secretory pathway (ivsp) family"/>
</dbReference>
<dbReference type="KEGG" id="sav:SAV0283"/>
<dbReference type="HOGENOM" id="CLU_015018_0_0_9"/>
<dbReference type="PhylomeDB" id="Q99WU3"/>
<dbReference type="Proteomes" id="UP000002481">
    <property type="component" value="Chromosome"/>
</dbReference>
<dbReference type="GO" id="GO:0005886">
    <property type="term" value="C:plasma membrane"/>
    <property type="evidence" value="ECO:0007669"/>
    <property type="project" value="UniProtKB-SubCell"/>
</dbReference>
<dbReference type="Gene3D" id="3.40.1710.10">
    <property type="entry name" value="abc type-2 transporter like domain"/>
    <property type="match status" value="1"/>
</dbReference>
<dbReference type="InterPro" id="IPR051328">
    <property type="entry name" value="T7SS_ABC-Transporter"/>
</dbReference>
<dbReference type="InterPro" id="IPR023838">
    <property type="entry name" value="T7SS_EsaA"/>
</dbReference>
<dbReference type="NCBIfam" id="TIGR03929">
    <property type="entry name" value="T7_esaA_Nterm"/>
    <property type="match status" value="1"/>
</dbReference>
<dbReference type="PANTHER" id="PTHR43077:SF10">
    <property type="entry name" value="TRANSPORT PERMEASE PROTEIN"/>
    <property type="match status" value="1"/>
</dbReference>
<dbReference type="PANTHER" id="PTHR43077">
    <property type="entry name" value="TRANSPORT PERMEASE YVFS-RELATED"/>
    <property type="match status" value="1"/>
</dbReference>
<comment type="function">
    <text evidence="1">Component of the type VII secretion system (Ess). Provides together with EssB and other components such as EssC and EssE a secretion platform across the cytoplasmic membrane in the host.</text>
</comment>
<comment type="subunit">
    <text evidence="1 3">Homodimer (By similarity). Interacts with EssB (By similarity).</text>
</comment>
<comment type="subcellular location">
    <subcellularLocation>
        <location evidence="3">Cell membrane</location>
        <topology evidence="4">Multi-pass membrane protein</topology>
    </subcellularLocation>
</comment>
<comment type="similarity">
    <text evidence="5">Belongs to the EsaA family.</text>
</comment>
<evidence type="ECO:0000250" key="1">
    <source>
        <dbReference type="UniProtKB" id="A0A0H2XFP1"/>
    </source>
</evidence>
<evidence type="ECO:0000250" key="2">
    <source>
        <dbReference type="UniProtKB" id="P0C049"/>
    </source>
</evidence>
<evidence type="ECO:0000250" key="3">
    <source>
        <dbReference type="UniProtKB" id="Q2G188"/>
    </source>
</evidence>
<evidence type="ECO:0000255" key="4"/>
<evidence type="ECO:0000305" key="5"/>
<accession>Q99WU3</accession>
<feature type="chain" id="PRO_0000087037" description="Type VII secretion system accessory factor EsaA">
    <location>
        <begin position="1"/>
        <end position="1009"/>
    </location>
</feature>
<feature type="transmembrane region" description="Helical" evidence="4">
    <location>
        <begin position="7"/>
        <end position="27"/>
    </location>
</feature>
<feature type="transmembrane region" description="Helical" evidence="4">
    <location>
        <begin position="822"/>
        <end position="842"/>
    </location>
</feature>
<feature type="transmembrane region" description="Helical" evidence="4">
    <location>
        <begin position="869"/>
        <end position="889"/>
    </location>
</feature>
<feature type="transmembrane region" description="Helical" evidence="4">
    <location>
        <begin position="903"/>
        <end position="923"/>
    </location>
</feature>
<feature type="transmembrane region" description="Helical" evidence="4">
    <location>
        <begin position="928"/>
        <end position="948"/>
    </location>
</feature>
<feature type="transmembrane region" description="Helical" evidence="4">
    <location>
        <begin position="979"/>
        <end position="999"/>
    </location>
</feature>
<protein>
    <recommendedName>
        <fullName evidence="2">Type VII secretion system accessory factor EsaA</fullName>
    </recommendedName>
</protein>
<proteinExistence type="inferred from homology"/>
<reference key="1">
    <citation type="journal article" date="2001" name="Lancet">
        <title>Whole genome sequencing of meticillin-resistant Staphylococcus aureus.</title>
        <authorList>
            <person name="Kuroda M."/>
            <person name="Ohta T."/>
            <person name="Uchiyama I."/>
            <person name="Baba T."/>
            <person name="Yuzawa H."/>
            <person name="Kobayashi I."/>
            <person name="Cui L."/>
            <person name="Oguchi A."/>
            <person name="Aoki K."/>
            <person name="Nagai Y."/>
            <person name="Lian J.-Q."/>
            <person name="Ito T."/>
            <person name="Kanamori M."/>
            <person name="Matsumaru H."/>
            <person name="Maruyama A."/>
            <person name="Murakami H."/>
            <person name="Hosoyama A."/>
            <person name="Mizutani-Ui Y."/>
            <person name="Takahashi N.K."/>
            <person name="Sawano T."/>
            <person name="Inoue R."/>
            <person name="Kaito C."/>
            <person name="Sekimizu K."/>
            <person name="Hirakawa H."/>
            <person name="Kuhara S."/>
            <person name="Goto S."/>
            <person name="Yabuzaki J."/>
            <person name="Kanehisa M."/>
            <person name="Yamashita A."/>
            <person name="Oshima K."/>
            <person name="Furuya K."/>
            <person name="Yoshino C."/>
            <person name="Shiba T."/>
            <person name="Hattori M."/>
            <person name="Ogasawara N."/>
            <person name="Hayashi H."/>
            <person name="Hiramatsu K."/>
        </authorList>
    </citation>
    <scope>NUCLEOTIDE SEQUENCE [LARGE SCALE GENOMIC DNA]</scope>
    <source>
        <strain>Mu50 / ATCC 700699</strain>
    </source>
</reference>
<sequence length="1009" mass="114782">MKKKNWIYALIVTLIIIIAIVSMIFFVQTKYGDQSEKGSQSVSNKNNKIHIAIVNEDQPTTYNGKKVELGQAFIKRLANEKNYKFETVTRNVAESGLKNGGYQVMIVIPENFSKLAMQLDAKTPSKISLQYKTAVGQKEEVAKNTEKVVSNVLNDFNKNLVEIYLTSIIDNLHNAQKNVGAIMTREHGVNSKFSNYLLNPINDFPELFTDTLVNSISANKDITKWFQTYNKSLLSANSDTFRVNTDYNVSTLIEKQNSLFDEHNTAMDKMLQDYKSQKDSVELDNYINALKQMDSQIDQQSSMQDTGKEEYKQTVKENLDKLREIIQSQESPFSKGMIEDYRKQLTESLQDELANNKDLQDALNSIKMNNAQFAENLEKQLHDDIVKEPDTDTTFIYNMSKQDFIAAGLNEGEANKYEAIVKEAKRYKNEYNLKKPLAEHINLTDYDNQVAQDTSSLINDGVKVQRTETIKSNDINQLTVATDPHFNFEGDIKINGKKYDIKDQSVQLDTSNKEYKVEVNGVAKLKKDAEKDFLKDKTMHLQLLFGQANRQDEPNDKKATSVVDVTLNHNLDGRLSKDALSQQLSALSRFDAHYKMYTDTKGREDKPFDNKRLIDMMVDQVINDMESFKDDKVAVLHQIDSMEENSDKLIDDILNNKKNTTKNKEDISKLIDQLENVKKTFAEEPQEPKIDKGKNDEFNTMSSNLDKEISRISEKSTQLLSDTQESKTIADSVSGQLNQLDNNVNKLHATGRALGVRANDLNRQMAKNDKDNELFAKEFKKVLQNSKDGDRQNQALKAFMSNPVQKKNLENVLANNGNTEVISPTLFVLLMYLLSMITAYIFYSYERAKGQMNFIKDDYSSKNHLWNNVITSGVIGTTGLVEGLIVGLIAMNKFHVLAGYRAKFILMVILTMMVFVLINTYLLRQVKSIGMFLMIAALGLYFVAMNNLKAAGQGVTNKISPLSYIDNMFFNYLNAEHPIGLALVILTVLVIIGFVLNMFIKHFKKERLI</sequence>